<protein>
    <recommendedName>
        <fullName evidence="1">Cell division protein DivIB</fullName>
    </recommendedName>
</protein>
<sequence>MRMELKMMGNVNKSNKTNEYILRRHKKKRKKKLIIFSILLISILVTLCFKHPFFNVKIVEVKDNKSIKKESIIKSSQISNENNIFYLNLNNVKNNIMSNPYILDAQIKRKLPNKIVIHIKERVALYYIEKDKKFYIIDNNGYVLEKKDNIKNMKLVRVDGIKKKDYNVGEPIFEQGNIRKNFMKNLASLIDKKDNNYEIAIVNIENMNNIQLKYRNIQIIIGDDEDLDKKLNKAFSILLQKEEIRGAKEGYINVSFKGNPVVFIK</sequence>
<dbReference type="EMBL" id="AE015927">
    <property type="protein sequence ID" value="AAO36171.1"/>
    <property type="molecule type" value="Genomic_DNA"/>
</dbReference>
<dbReference type="SMR" id="Q894C1"/>
<dbReference type="STRING" id="212717.CTC_01628"/>
<dbReference type="KEGG" id="ctc:CTC_01628"/>
<dbReference type="HOGENOM" id="CLU_047677_4_2_9"/>
<dbReference type="OrthoDB" id="1953902at2"/>
<dbReference type="Proteomes" id="UP000001412">
    <property type="component" value="Chromosome"/>
</dbReference>
<dbReference type="GO" id="GO:0032153">
    <property type="term" value="C:cell division site"/>
    <property type="evidence" value="ECO:0007669"/>
    <property type="project" value="UniProtKB-UniRule"/>
</dbReference>
<dbReference type="GO" id="GO:0005886">
    <property type="term" value="C:plasma membrane"/>
    <property type="evidence" value="ECO:0007669"/>
    <property type="project" value="UniProtKB-SubCell"/>
</dbReference>
<dbReference type="GO" id="GO:0043093">
    <property type="term" value="P:FtsZ-dependent cytokinesis"/>
    <property type="evidence" value="ECO:0007669"/>
    <property type="project" value="UniProtKB-UniRule"/>
</dbReference>
<dbReference type="Gene3D" id="3.10.20.310">
    <property type="entry name" value="membrane protein fhac"/>
    <property type="match status" value="1"/>
</dbReference>
<dbReference type="HAMAP" id="MF_00912">
    <property type="entry name" value="DivIB"/>
    <property type="match status" value="1"/>
</dbReference>
<dbReference type="InterPro" id="IPR005548">
    <property type="entry name" value="Cell_div_FtsQ/DivIB_C"/>
</dbReference>
<dbReference type="InterPro" id="IPR026580">
    <property type="entry name" value="DivIB"/>
</dbReference>
<dbReference type="InterPro" id="IPR050487">
    <property type="entry name" value="FtsQ_DivIB"/>
</dbReference>
<dbReference type="InterPro" id="IPR034746">
    <property type="entry name" value="POTRA"/>
</dbReference>
<dbReference type="InterPro" id="IPR013685">
    <property type="entry name" value="POTRA_FtsQ_type"/>
</dbReference>
<dbReference type="PANTHER" id="PTHR37820">
    <property type="entry name" value="CELL DIVISION PROTEIN DIVIB"/>
    <property type="match status" value="1"/>
</dbReference>
<dbReference type="PANTHER" id="PTHR37820:SF1">
    <property type="entry name" value="CELL DIVISION PROTEIN FTSQ"/>
    <property type="match status" value="1"/>
</dbReference>
<dbReference type="Pfam" id="PF03799">
    <property type="entry name" value="FtsQ_DivIB_C"/>
    <property type="match status" value="1"/>
</dbReference>
<dbReference type="Pfam" id="PF08478">
    <property type="entry name" value="POTRA_1"/>
    <property type="match status" value="1"/>
</dbReference>
<dbReference type="PROSITE" id="PS51779">
    <property type="entry name" value="POTRA"/>
    <property type="match status" value="1"/>
</dbReference>
<organism>
    <name type="scientific">Clostridium tetani (strain Massachusetts / E88)</name>
    <dbReference type="NCBI Taxonomy" id="212717"/>
    <lineage>
        <taxon>Bacteria</taxon>
        <taxon>Bacillati</taxon>
        <taxon>Bacillota</taxon>
        <taxon>Clostridia</taxon>
        <taxon>Eubacteriales</taxon>
        <taxon>Clostridiaceae</taxon>
        <taxon>Clostridium</taxon>
    </lineage>
</organism>
<gene>
    <name evidence="1" type="primary">divIB</name>
    <name type="synonym">ftsQ</name>
    <name type="ordered locus">CTC_01628</name>
</gene>
<proteinExistence type="inferred from homology"/>
<accession>Q894C1</accession>
<evidence type="ECO:0000255" key="1">
    <source>
        <dbReference type="HAMAP-Rule" id="MF_00912"/>
    </source>
</evidence>
<evidence type="ECO:0000255" key="2">
    <source>
        <dbReference type="PROSITE-ProRule" id="PRU01115"/>
    </source>
</evidence>
<comment type="function">
    <text evidence="1">Cell division protein that may be involved in stabilizing or promoting the assembly of the division complex.</text>
</comment>
<comment type="subcellular location">
    <subcellularLocation>
        <location evidence="1">Cell membrane</location>
        <topology evidence="1">Single-pass type II membrane protein</topology>
    </subcellularLocation>
    <text evidence="1">Localizes to the division septum.</text>
</comment>
<comment type="similarity">
    <text evidence="1">Belongs to the FtsQ/DivIB family. DivIB subfamily.</text>
</comment>
<keyword id="KW-0131">Cell cycle</keyword>
<keyword id="KW-0132">Cell division</keyword>
<keyword id="KW-1003">Cell membrane</keyword>
<keyword id="KW-0472">Membrane</keyword>
<keyword id="KW-1185">Reference proteome</keyword>
<keyword id="KW-0812">Transmembrane</keyword>
<keyword id="KW-1133">Transmembrane helix</keyword>
<reference key="1">
    <citation type="journal article" date="2003" name="Proc. Natl. Acad. Sci. U.S.A.">
        <title>The genome sequence of Clostridium tetani, the causative agent of tetanus disease.</title>
        <authorList>
            <person name="Brueggemann H."/>
            <person name="Baeumer S."/>
            <person name="Fricke W.F."/>
            <person name="Wiezer A."/>
            <person name="Liesegang H."/>
            <person name="Decker I."/>
            <person name="Herzberg C."/>
            <person name="Martinez-Arias R."/>
            <person name="Merkl R."/>
            <person name="Henne A."/>
            <person name="Gottschalk G."/>
        </authorList>
    </citation>
    <scope>NUCLEOTIDE SEQUENCE [LARGE SCALE GENOMIC DNA]</scope>
    <source>
        <strain>Massachusetts / E88</strain>
    </source>
</reference>
<name>DIVIB_CLOTE</name>
<feature type="chain" id="PRO_0000414764" description="Cell division protein DivIB">
    <location>
        <begin position="1"/>
        <end position="265"/>
    </location>
</feature>
<feature type="topological domain" description="Cytoplasmic" evidence="1">
    <location>
        <begin position="1"/>
        <end position="33"/>
    </location>
</feature>
<feature type="transmembrane region" description="Helical" evidence="1">
    <location>
        <begin position="34"/>
        <end position="54"/>
    </location>
</feature>
<feature type="topological domain" description="Extracellular" evidence="1">
    <location>
        <begin position="55"/>
        <end position="265"/>
    </location>
</feature>
<feature type="domain" description="POTRA" evidence="2">
    <location>
        <begin position="54"/>
        <end position="122"/>
    </location>
</feature>